<name>CHS1_PYRO7</name>
<gene>
    <name evidence="5" type="primary">CHS1</name>
    <name type="ORF">MGG_01802</name>
</gene>
<reference key="1">
    <citation type="journal article" date="2005" name="Nature">
        <title>The genome sequence of the rice blast fungus Magnaporthe grisea.</title>
        <authorList>
            <person name="Dean R.A."/>
            <person name="Talbot N.J."/>
            <person name="Ebbole D.J."/>
            <person name="Farman M.L."/>
            <person name="Mitchell T.K."/>
            <person name="Orbach M.J."/>
            <person name="Thon M.R."/>
            <person name="Kulkarni R."/>
            <person name="Xu J.-R."/>
            <person name="Pan H."/>
            <person name="Read N.D."/>
            <person name="Lee Y.-H."/>
            <person name="Carbone I."/>
            <person name="Brown D."/>
            <person name="Oh Y.Y."/>
            <person name="Donofrio N."/>
            <person name="Jeong J.S."/>
            <person name="Soanes D.M."/>
            <person name="Djonovic S."/>
            <person name="Kolomiets E."/>
            <person name="Rehmeyer C."/>
            <person name="Li W."/>
            <person name="Harding M."/>
            <person name="Kim S."/>
            <person name="Lebrun M.-H."/>
            <person name="Bohnert H."/>
            <person name="Coughlan S."/>
            <person name="Butler J."/>
            <person name="Calvo S.E."/>
            <person name="Ma L.-J."/>
            <person name="Nicol R."/>
            <person name="Purcell S."/>
            <person name="Nusbaum C."/>
            <person name="Galagan J.E."/>
            <person name="Birren B.W."/>
        </authorList>
    </citation>
    <scope>NUCLEOTIDE SEQUENCE [LARGE SCALE GENOMIC DNA]</scope>
    <source>
        <strain>70-15 / ATCC MYA-4617 / FGSC 8958</strain>
    </source>
</reference>
<reference key="2">
    <citation type="journal article" date="2012" name="PLoS Pathog.">
        <title>Different chitin synthase genes are required for various developmental and plant infection processes in the rice blast fungus Magnaporthe oryzae.</title>
        <authorList>
            <person name="Kong L.A."/>
            <person name="Yang J."/>
            <person name="Li G.T."/>
            <person name="Qi L.L."/>
            <person name="Zhang Y.J."/>
            <person name="Wang C.F."/>
            <person name="Zhao W.S."/>
            <person name="Xu J.R."/>
            <person name="Peng Y.L."/>
        </authorList>
    </citation>
    <scope>FUNCTION</scope>
    <scope>INDUCTION</scope>
    <scope>DISRUPTION PHENOTYPE</scope>
</reference>
<protein>
    <recommendedName>
        <fullName evidence="5">Chitin synthase 1</fullName>
        <ecNumber evidence="4">2.4.1.16</ecNumber>
    </recommendedName>
    <alternativeName>
        <fullName evidence="6">Chitin-UDP acetyl-glucosaminyl transferase 1</fullName>
    </alternativeName>
    <alternativeName>
        <fullName evidence="5">Class-III chitin synthase 1</fullName>
    </alternativeName>
</protein>
<feature type="chain" id="PRO_0000460876" description="Chitin synthase 1">
    <location>
        <begin position="1"/>
        <end position="929"/>
    </location>
</feature>
<feature type="transmembrane region" description="Helical" evidence="1">
    <location>
        <begin position="587"/>
        <end position="607"/>
    </location>
</feature>
<feature type="transmembrane region" description="Helical" evidence="1">
    <location>
        <begin position="643"/>
        <end position="663"/>
    </location>
</feature>
<feature type="transmembrane region" description="Helical" evidence="1">
    <location>
        <begin position="678"/>
        <end position="698"/>
    </location>
</feature>
<feature type="transmembrane region" description="Helical" evidence="1">
    <location>
        <begin position="730"/>
        <end position="750"/>
    </location>
</feature>
<feature type="transmembrane region" description="Helical" evidence="1">
    <location>
        <begin position="758"/>
        <end position="778"/>
    </location>
</feature>
<feature type="transmembrane region" description="Helical" evidence="1">
    <location>
        <begin position="857"/>
        <end position="877"/>
    </location>
</feature>
<feature type="transmembrane region" description="Helical" evidence="1">
    <location>
        <begin position="897"/>
        <end position="917"/>
    </location>
</feature>
<feature type="region of interest" description="Disordered" evidence="3">
    <location>
        <begin position="1"/>
        <end position="43"/>
    </location>
</feature>
<feature type="region of interest" description="Disordered" evidence="3">
    <location>
        <begin position="114"/>
        <end position="156"/>
    </location>
</feature>
<feature type="compositionally biased region" description="Gly residues" evidence="3">
    <location>
        <begin position="1"/>
        <end position="12"/>
    </location>
</feature>
<feature type="compositionally biased region" description="Polar residues" evidence="3">
    <location>
        <begin position="21"/>
        <end position="33"/>
    </location>
</feature>
<feature type="compositionally biased region" description="Polar residues" evidence="3">
    <location>
        <begin position="140"/>
        <end position="149"/>
    </location>
</feature>
<feature type="glycosylation site" description="N-linked (GlcNAc...) asparagine" evidence="2">
    <location>
        <position position="560"/>
    </location>
</feature>
<feature type="glycosylation site" description="N-linked (GlcNAc...) asparagine" evidence="2">
    <location>
        <position position="801"/>
    </location>
</feature>
<sequence length="929" mass="104174">MAYRGAGGPGGGRDYDGHNMQDLNPHSQYSNVQLPPGHEQEDEAHRSLLTQGTTLYDHDRLGAHTPPVRPVSAYSLTESYAPNAPTTVPGSAVGASPSPFQNDYGVSSGYQGAMGGHADDGFPIGGGDPQQGHPYDTEDSWVQRQNPNAAPQGGGLKRYATRKVKLVQGSVLSIDYNVPSAIRNAVQPKYREQEGTNEEFIKMRYTAATCDPNDFTLKNGYDLRPRMYNRHTELLIAITYYNEDKVLLSRTLHGVMQNIRDIVNLKKSTFWNKGGPAWQKIVVCLVFDGIEKTDKNVLDVLATIGIYQDGVVKKDVHGQETVAHIFEYTTQLSVTPSQQLIRPQDDGPNTLPPVQFIFCLKAKNSKKINSHRWLFNAFGRILNPEVCILLDAGTKPSSRSLLGLWEGFYNDKDLGGACGEIHAMLGKGGRKLLNPLVAVQNFEYKISNILDKPLESAFGYVSVLPGAFSAYRFRAIMGRPLEQYFHGDHTLSKILGKKGIEGMNIFKKNMFLAEDRILCFELVAKAGQKWHLSYIKAAKGETDVPEGAAEFISQRRRWLNGSFAATLYSLMHFGRMYKSGHNIIRMFFFHVQLIYNILNVIFTWFSLASYWLTTTVIMDLVGNPQVGQNAREGWPFGNTVTPLFNAVLKYIYLAFVILQFILALGNRPKGSKYTYVTSFFVFSVIQAYILVLSGYLVVQAFQTPIGEQIKTDTAKDFMDSIFGKSGAAGVILLALIAIYGIYFIASFMYLDPWHMFHSFPYYMLLMSTYINILMVYAFNNWHDVSWGTKGSDSNEALPSANITKGEKDEVVVEEIDKPQEDIDSQFEATVRRALAPFNDEEKPEPKDLEDSYKSFRTMLVVLWLFSNCLLAVAITSDNFDALTKNQNTARTASFFQFLLFSTAFLSLIRFIGFLWFLGKTGIMCCIARR</sequence>
<comment type="function">
    <text evidence="4 7">Polymerizes chitin, a structural polymer of the cell wall and septum, by transferring the sugar moiety of UDP-GlcNAc to the non-reducing end of the growing chitin polymer (Probable). CHS1 and CHS3 have compensatory functions in cell wall modifications in responses to stresses (PubMed:22346755). Involved in appressoria formation and required for full virulence (PubMed:22346755).</text>
</comment>
<comment type="catalytic activity">
    <reaction evidence="7">
        <text>[(1-&gt;4)-N-acetyl-beta-D-glucosaminyl](n) + UDP-N-acetyl-alpha-D-glucosamine = [(1-&gt;4)-N-acetyl-beta-D-glucosaminyl](n+1) + UDP + H(+)</text>
        <dbReference type="Rhea" id="RHEA:16637"/>
        <dbReference type="Rhea" id="RHEA-COMP:9593"/>
        <dbReference type="Rhea" id="RHEA-COMP:9595"/>
        <dbReference type="ChEBI" id="CHEBI:15378"/>
        <dbReference type="ChEBI" id="CHEBI:17029"/>
        <dbReference type="ChEBI" id="CHEBI:57705"/>
        <dbReference type="ChEBI" id="CHEBI:58223"/>
        <dbReference type="EC" id="2.4.1.16"/>
    </reaction>
    <physiologicalReaction direction="left-to-right" evidence="7">
        <dbReference type="Rhea" id="RHEA:16638"/>
    </physiologicalReaction>
</comment>
<comment type="subcellular location">
    <subcellularLocation>
        <location evidence="6">Cell membrane</location>
        <topology evidence="1">Multi-pass membrane protein</topology>
    </subcellularLocation>
</comment>
<comment type="induction">
    <text evidence="4">Expression is the lowest in vegetative hyphae and the highest in conidia, especially in young, developing conidia (PubMed:22346755). Expression levels are increased in appressoria and infected rice leaves in comparison with vegetative hyphae (PubMed:22346755).</text>
</comment>
<comment type="disruption phenotype">
    <text evidence="4">Does not affect vegetative growth (PubMed:22346755). Tends to produce fluffy colonies and is slightly reduced in the melanization of aerial hyphae (PubMed:22346755). Slightly reduces conidiation and tends to form pear-shaped, single-celled conidia (PubMed:22346755). Does not significantly changes in the chitin content in vegetative hyphae, but increases the chitin content by approximately 30% in conidia (PubMed:22346755).</text>
</comment>
<comment type="similarity">
    <text evidence="6">Belongs to the chitin synthase family. Class III subfamily.</text>
</comment>
<accession>G4MVT6</accession>
<evidence type="ECO:0000255" key="1"/>
<evidence type="ECO:0000255" key="2">
    <source>
        <dbReference type="PROSITE-ProRule" id="PRU00498"/>
    </source>
</evidence>
<evidence type="ECO:0000256" key="3">
    <source>
        <dbReference type="SAM" id="MobiDB-lite"/>
    </source>
</evidence>
<evidence type="ECO:0000269" key="4">
    <source>
    </source>
</evidence>
<evidence type="ECO:0000303" key="5">
    <source>
    </source>
</evidence>
<evidence type="ECO:0000305" key="6"/>
<evidence type="ECO:0000305" key="7">
    <source>
    </source>
</evidence>
<keyword id="KW-1003">Cell membrane</keyword>
<keyword id="KW-0961">Cell wall biogenesis/degradation</keyword>
<keyword id="KW-0325">Glycoprotein</keyword>
<keyword id="KW-0328">Glycosyltransferase</keyword>
<keyword id="KW-0472">Membrane</keyword>
<keyword id="KW-1185">Reference proteome</keyword>
<keyword id="KW-0808">Transferase</keyword>
<keyword id="KW-0812">Transmembrane</keyword>
<keyword id="KW-1133">Transmembrane helix</keyword>
<keyword id="KW-0843">Virulence</keyword>
<organism>
    <name type="scientific">Pyricularia oryzae (strain 70-15 / ATCC MYA-4617 / FGSC 8958)</name>
    <name type="common">Rice blast fungus</name>
    <name type="synonym">Magnaporthe oryzae</name>
    <dbReference type="NCBI Taxonomy" id="242507"/>
    <lineage>
        <taxon>Eukaryota</taxon>
        <taxon>Fungi</taxon>
        <taxon>Dikarya</taxon>
        <taxon>Ascomycota</taxon>
        <taxon>Pezizomycotina</taxon>
        <taxon>Sordariomycetes</taxon>
        <taxon>Sordariomycetidae</taxon>
        <taxon>Magnaporthales</taxon>
        <taxon>Pyriculariaceae</taxon>
        <taxon>Pyricularia</taxon>
    </lineage>
</organism>
<dbReference type="EC" id="2.4.1.16" evidence="4"/>
<dbReference type="EMBL" id="CM001232">
    <property type="protein sequence ID" value="EHA55002.1"/>
    <property type="molecule type" value="Genomic_DNA"/>
</dbReference>
<dbReference type="RefSeq" id="XP_003714809.1">
    <property type="nucleotide sequence ID" value="XM_003714761.1"/>
</dbReference>
<dbReference type="SMR" id="G4MVT6"/>
<dbReference type="STRING" id="242507.G4MVT6"/>
<dbReference type="CAZy" id="GT2">
    <property type="family name" value="Glycosyltransferase Family 2"/>
</dbReference>
<dbReference type="EnsemblFungi" id="MGG_01802T0">
    <property type="protein sequence ID" value="MGG_01802T0"/>
    <property type="gene ID" value="MGG_01802"/>
</dbReference>
<dbReference type="GeneID" id="2679381"/>
<dbReference type="KEGG" id="mgr:MGG_01802"/>
<dbReference type="VEuPathDB" id="FungiDB:MGG_01802"/>
<dbReference type="eggNOG" id="KOG2571">
    <property type="taxonomic scope" value="Eukaryota"/>
</dbReference>
<dbReference type="HOGENOM" id="CLU_004760_0_1_1"/>
<dbReference type="InParanoid" id="G4MVT6"/>
<dbReference type="OMA" id="WHLTYIK"/>
<dbReference type="OrthoDB" id="26569at2759"/>
<dbReference type="Proteomes" id="UP000009058">
    <property type="component" value="Chromosome 2"/>
</dbReference>
<dbReference type="GO" id="GO:0030428">
    <property type="term" value="C:cell septum"/>
    <property type="evidence" value="ECO:0007669"/>
    <property type="project" value="TreeGrafter"/>
</dbReference>
<dbReference type="GO" id="GO:0005886">
    <property type="term" value="C:plasma membrane"/>
    <property type="evidence" value="ECO:0007669"/>
    <property type="project" value="UniProtKB-SubCell"/>
</dbReference>
<dbReference type="GO" id="GO:0004100">
    <property type="term" value="F:chitin synthase activity"/>
    <property type="evidence" value="ECO:0007669"/>
    <property type="project" value="UniProtKB-EC"/>
</dbReference>
<dbReference type="GO" id="GO:0071555">
    <property type="term" value="P:cell wall organization"/>
    <property type="evidence" value="ECO:0007669"/>
    <property type="project" value="UniProtKB-KW"/>
</dbReference>
<dbReference type="GO" id="GO:0006031">
    <property type="term" value="P:chitin biosynthetic process"/>
    <property type="evidence" value="ECO:0007669"/>
    <property type="project" value="InterPro"/>
</dbReference>
<dbReference type="CDD" id="cd04190">
    <property type="entry name" value="Chitin_synth_C"/>
    <property type="match status" value="1"/>
</dbReference>
<dbReference type="InterPro" id="IPR004835">
    <property type="entry name" value="Chitin_synth"/>
</dbReference>
<dbReference type="InterPro" id="IPR004834">
    <property type="entry name" value="Chitin_synth_fun"/>
</dbReference>
<dbReference type="InterPro" id="IPR013616">
    <property type="entry name" value="Chitin_synth_N"/>
</dbReference>
<dbReference type="InterPro" id="IPR029044">
    <property type="entry name" value="Nucleotide-diphossugar_trans"/>
</dbReference>
<dbReference type="PANTHER" id="PTHR22914">
    <property type="entry name" value="CHITIN SYNTHASE"/>
    <property type="match status" value="1"/>
</dbReference>
<dbReference type="PANTHER" id="PTHR22914:SF11">
    <property type="entry name" value="CHITIN SYNTHASE B"/>
    <property type="match status" value="1"/>
</dbReference>
<dbReference type="Pfam" id="PF01644">
    <property type="entry name" value="Chitin_synth_1"/>
    <property type="match status" value="1"/>
</dbReference>
<dbReference type="Pfam" id="PF08407">
    <property type="entry name" value="Chitin_synth_1N"/>
    <property type="match status" value="1"/>
</dbReference>
<dbReference type="SUPFAM" id="SSF53448">
    <property type="entry name" value="Nucleotide-diphospho-sugar transferases"/>
    <property type="match status" value="1"/>
</dbReference>
<proteinExistence type="evidence at transcript level"/>